<evidence type="ECO:0000255" key="1">
    <source>
        <dbReference type="HAMAP-Rule" id="MF_01297"/>
    </source>
</evidence>
<evidence type="ECO:0000256" key="2">
    <source>
        <dbReference type="SAM" id="MobiDB-lite"/>
    </source>
</evidence>
<organism>
    <name type="scientific">Micrococcus luteus (strain ATCC 4698 / DSM 20030 / JCM 1464 / CCM 169 / CCUG 5858 / IAM 1056 / NBRC 3333 / NCIMB 9278 / NCTC 2665 / VKM Ac-2230)</name>
    <name type="common">Micrococcus lysodeikticus</name>
    <dbReference type="NCBI Taxonomy" id="465515"/>
    <lineage>
        <taxon>Bacteria</taxon>
        <taxon>Bacillati</taxon>
        <taxon>Actinomycetota</taxon>
        <taxon>Actinomycetes</taxon>
        <taxon>Micrococcales</taxon>
        <taxon>Micrococcaceae</taxon>
        <taxon>Micrococcus</taxon>
    </lineage>
</organism>
<dbReference type="EC" id="5.99.-.-" evidence="1"/>
<dbReference type="EMBL" id="CP001628">
    <property type="protein sequence ID" value="ACS31226.1"/>
    <property type="molecule type" value="Genomic_DNA"/>
</dbReference>
<dbReference type="RefSeq" id="WP_010080364.1">
    <property type="nucleotide sequence ID" value="NC_012803.1"/>
</dbReference>
<dbReference type="SMR" id="C5CC85"/>
<dbReference type="STRING" id="465515.Mlut_17400"/>
<dbReference type="EnsemblBacteria" id="ACS31226">
    <property type="protein sequence ID" value="ACS31226"/>
    <property type="gene ID" value="Mlut_17400"/>
</dbReference>
<dbReference type="GeneID" id="93343606"/>
<dbReference type="KEGG" id="mlu:Mlut_17400"/>
<dbReference type="PATRIC" id="fig|465515.4.peg.1679"/>
<dbReference type="eggNOG" id="COG3485">
    <property type="taxonomic scope" value="Bacteria"/>
</dbReference>
<dbReference type="HOGENOM" id="CLU_085483_0_1_11"/>
<dbReference type="Proteomes" id="UP000000738">
    <property type="component" value="Chromosome"/>
</dbReference>
<dbReference type="GO" id="GO:0020037">
    <property type="term" value="F:heme binding"/>
    <property type="evidence" value="ECO:0007669"/>
    <property type="project" value="UniProtKB-UniRule"/>
</dbReference>
<dbReference type="GO" id="GO:0046872">
    <property type="term" value="F:metal ion binding"/>
    <property type="evidence" value="ECO:0007669"/>
    <property type="project" value="UniProtKB-KW"/>
</dbReference>
<dbReference type="GO" id="GO:0062213">
    <property type="term" value="F:peroxynitrite isomerase activity"/>
    <property type="evidence" value="ECO:0007669"/>
    <property type="project" value="UniProtKB-UniRule"/>
</dbReference>
<dbReference type="CDD" id="cd07828">
    <property type="entry name" value="lipocalin_heme-bd-THAP4-like"/>
    <property type="match status" value="1"/>
</dbReference>
<dbReference type="Gene3D" id="2.40.128.20">
    <property type="match status" value="1"/>
</dbReference>
<dbReference type="HAMAP" id="MF_01297">
    <property type="entry name" value="nitrobindin"/>
    <property type="match status" value="1"/>
</dbReference>
<dbReference type="InterPro" id="IPR012674">
    <property type="entry name" value="Calycin"/>
</dbReference>
<dbReference type="InterPro" id="IPR022939">
    <property type="entry name" value="Nb(III)_bact/plant"/>
</dbReference>
<dbReference type="InterPro" id="IPR045165">
    <property type="entry name" value="Nitrobindin"/>
</dbReference>
<dbReference type="InterPro" id="IPR014878">
    <property type="entry name" value="THAP4-like_heme-bd"/>
</dbReference>
<dbReference type="PANTHER" id="PTHR15854:SF4">
    <property type="entry name" value="PEROXYNITRITE ISOMERASE THAP4"/>
    <property type="match status" value="1"/>
</dbReference>
<dbReference type="PANTHER" id="PTHR15854">
    <property type="entry name" value="THAP4 PROTEIN"/>
    <property type="match status" value="1"/>
</dbReference>
<dbReference type="Pfam" id="PF08768">
    <property type="entry name" value="THAP4_heme-bd"/>
    <property type="match status" value="1"/>
</dbReference>
<dbReference type="SUPFAM" id="SSF50814">
    <property type="entry name" value="Lipocalins"/>
    <property type="match status" value="1"/>
</dbReference>
<sequence>MATELPYDLTPELAPLSWLIGSWEGQGRLGDGSADTEIFYQRVDFTELGLPFVEYRAESWLCEADGTLLRPLTVESGFWQVDRERRDGDVGPGMRPADIVPAFRSAEDVERLRAGDEGFGLTATIAHPGSLSELYYGRIKGPQLQLATEAILRGSAAGPYHRATRMAGLVNGQLFWRWDVADAAGAELEAHASAILDRMPSAAEGRLAPGAERPRGAGGRKQGEQS</sequence>
<gene>
    <name type="ordered locus">Mlut_17400</name>
</gene>
<protein>
    <recommendedName>
        <fullName>Peroxynitrite isomerase</fullName>
        <ecNumber evidence="1">5.99.-.-</ecNumber>
    </recommendedName>
    <alternativeName>
        <fullName>Ferric nitrobindin</fullName>
        <shortName>Nb(III)</shortName>
    </alternativeName>
</protein>
<comment type="function">
    <text evidence="1">Heme-binding protein able to scavenge peroxynitrite and to protect free L-tyrosine against peroxynitrite-mediated nitration, by acting as a peroxynitrite isomerase that converts peroxynitrite to nitrate. Therefore, this protein likely plays a role in peroxynitrite sensing and in the detoxification of reactive nitrogen and oxygen species (RNS and ROS, respectively). Is able to bind nitric oxide (NO) in vitro, but may act as a sensor of peroxynitrite levels in vivo.</text>
</comment>
<comment type="catalytic activity">
    <reaction evidence="1">
        <text>peroxynitrite = nitrate</text>
        <dbReference type="Rhea" id="RHEA:63116"/>
        <dbReference type="ChEBI" id="CHEBI:17632"/>
        <dbReference type="ChEBI" id="CHEBI:25941"/>
    </reaction>
    <physiologicalReaction direction="left-to-right" evidence="1">
        <dbReference type="Rhea" id="RHEA:63117"/>
    </physiologicalReaction>
</comment>
<comment type="cofactor">
    <cofactor evidence="1">
        <name>heme b</name>
        <dbReference type="ChEBI" id="CHEBI:60344"/>
    </cofactor>
    <text evidence="1">Binds 1 heme b group per subunit, that coordinates a highly solvent-exposed Fe(III) atom.</text>
</comment>
<comment type="pathway">
    <text evidence="1">Nitrogen metabolism.</text>
</comment>
<comment type="subunit">
    <text evidence="1">Homodimer.</text>
</comment>
<comment type="domain">
    <text evidence="1">Forms a 10-stranded antiparallel beta-barrel structure able to accommodate a hydrophobic ligand in its interior. In fact, this fold hosts the heme group, which is located in a wide surface cleft.</text>
</comment>
<comment type="similarity">
    <text evidence="1">Belongs to the nitrobindin family.</text>
</comment>
<reference key="1">
    <citation type="journal article" date="2010" name="J. Bacteriol.">
        <title>Genome sequence of the Fleming strain of Micrococcus luteus, a simple free-living actinobacterium.</title>
        <authorList>
            <person name="Young M."/>
            <person name="Artsatbanov V."/>
            <person name="Beller H.R."/>
            <person name="Chandra G."/>
            <person name="Chater K.F."/>
            <person name="Dover L.G."/>
            <person name="Goh E.B."/>
            <person name="Kahan T."/>
            <person name="Kaprelyants A.S."/>
            <person name="Kyrpides N."/>
            <person name="Lapidus A."/>
            <person name="Lowry S.R."/>
            <person name="Lykidis A."/>
            <person name="Mahillon J."/>
            <person name="Markowitz V."/>
            <person name="Mavromatis K."/>
            <person name="Mukamolova G.V."/>
            <person name="Oren A."/>
            <person name="Rokem J.S."/>
            <person name="Smith M.C."/>
            <person name="Young D.I."/>
            <person name="Greenblatt C.L."/>
        </authorList>
    </citation>
    <scope>NUCLEOTIDE SEQUENCE [LARGE SCALE GENOMIC DNA]</scope>
    <source>
        <strain>ATCC 4698 / DSM 20030 / JCM 1464 / CCM 169 / CCUG 5858 / IAM 1056 / NBRC 3333 / NCIMB 9278 / NCTC 2665 / VKM Ac-2230</strain>
    </source>
</reference>
<keyword id="KW-0349">Heme</keyword>
<keyword id="KW-0408">Iron</keyword>
<keyword id="KW-0413">Isomerase</keyword>
<keyword id="KW-0479">Metal-binding</keyword>
<keyword id="KW-1185">Reference proteome</keyword>
<name>NB_MICLC</name>
<feature type="chain" id="PRO_1000214224" description="Peroxynitrite isomerase">
    <location>
        <begin position="1"/>
        <end position="226"/>
    </location>
</feature>
<feature type="region of interest" description="Disordered" evidence="2">
    <location>
        <begin position="201"/>
        <end position="226"/>
    </location>
</feature>
<feature type="short sequence motif" description="GXWXGXG" evidence="1">
    <location>
        <begin position="21"/>
        <end position="27"/>
    </location>
</feature>
<feature type="binding site" description="axial binding residue" evidence="1">
    <location>
        <position position="191"/>
    </location>
    <ligand>
        <name>heme b</name>
        <dbReference type="ChEBI" id="CHEBI:60344"/>
    </ligand>
    <ligandPart>
        <name>Fe</name>
        <dbReference type="ChEBI" id="CHEBI:18248"/>
    </ligandPart>
</feature>
<accession>C5CC85</accession>
<proteinExistence type="inferred from homology"/>